<reference key="1">
    <citation type="journal article" date="2000" name="J. Biol. Chem.">
        <title>Cloning and characterization of the murine glucosamine-6-phosphate acetyltransferase EMeg32: differential expression and intracellular membrane association.</title>
        <authorList>
            <person name="Boehmelt G."/>
            <person name="Fialka I."/>
            <person name="Brothers G."/>
            <person name="McGinley M.D."/>
            <person name="Patterson S.D."/>
            <person name="Rong M."/>
            <person name="Hui C.C."/>
            <person name="Chung S."/>
            <person name="Huber L.A."/>
            <person name="Mak T.W."/>
            <person name="Iscove N.N."/>
        </authorList>
    </citation>
    <scope>NUCLEOTIDE SEQUENCE [MRNA]</scope>
    <scope>SUBCELLULAR LOCATION</scope>
    <scope>TISSUE SPECIFICITY</scope>
    <scope>DEVELOPMENTAL STAGE</scope>
    <source>
        <strain>C57BL/6J</strain>
    </source>
</reference>
<reference key="2">
    <citation type="journal article" date="2005" name="Science">
        <title>The transcriptional landscape of the mammalian genome.</title>
        <authorList>
            <person name="Carninci P."/>
            <person name="Kasukawa T."/>
            <person name="Katayama S."/>
            <person name="Gough J."/>
            <person name="Frith M.C."/>
            <person name="Maeda N."/>
            <person name="Oyama R."/>
            <person name="Ravasi T."/>
            <person name="Lenhard B."/>
            <person name="Wells C."/>
            <person name="Kodzius R."/>
            <person name="Shimokawa K."/>
            <person name="Bajic V.B."/>
            <person name="Brenner S.E."/>
            <person name="Batalov S."/>
            <person name="Forrest A.R."/>
            <person name="Zavolan M."/>
            <person name="Davis M.J."/>
            <person name="Wilming L.G."/>
            <person name="Aidinis V."/>
            <person name="Allen J.E."/>
            <person name="Ambesi-Impiombato A."/>
            <person name="Apweiler R."/>
            <person name="Aturaliya R.N."/>
            <person name="Bailey T.L."/>
            <person name="Bansal M."/>
            <person name="Baxter L."/>
            <person name="Beisel K.W."/>
            <person name="Bersano T."/>
            <person name="Bono H."/>
            <person name="Chalk A.M."/>
            <person name="Chiu K.P."/>
            <person name="Choudhary V."/>
            <person name="Christoffels A."/>
            <person name="Clutterbuck D.R."/>
            <person name="Crowe M.L."/>
            <person name="Dalla E."/>
            <person name="Dalrymple B.P."/>
            <person name="de Bono B."/>
            <person name="Della Gatta G."/>
            <person name="di Bernardo D."/>
            <person name="Down T."/>
            <person name="Engstrom P."/>
            <person name="Fagiolini M."/>
            <person name="Faulkner G."/>
            <person name="Fletcher C.F."/>
            <person name="Fukushima T."/>
            <person name="Furuno M."/>
            <person name="Futaki S."/>
            <person name="Gariboldi M."/>
            <person name="Georgii-Hemming P."/>
            <person name="Gingeras T.R."/>
            <person name="Gojobori T."/>
            <person name="Green R.E."/>
            <person name="Gustincich S."/>
            <person name="Harbers M."/>
            <person name="Hayashi Y."/>
            <person name="Hensch T.K."/>
            <person name="Hirokawa N."/>
            <person name="Hill D."/>
            <person name="Huminiecki L."/>
            <person name="Iacono M."/>
            <person name="Ikeo K."/>
            <person name="Iwama A."/>
            <person name="Ishikawa T."/>
            <person name="Jakt M."/>
            <person name="Kanapin A."/>
            <person name="Katoh M."/>
            <person name="Kawasawa Y."/>
            <person name="Kelso J."/>
            <person name="Kitamura H."/>
            <person name="Kitano H."/>
            <person name="Kollias G."/>
            <person name="Krishnan S.P."/>
            <person name="Kruger A."/>
            <person name="Kummerfeld S.K."/>
            <person name="Kurochkin I.V."/>
            <person name="Lareau L.F."/>
            <person name="Lazarevic D."/>
            <person name="Lipovich L."/>
            <person name="Liu J."/>
            <person name="Liuni S."/>
            <person name="McWilliam S."/>
            <person name="Madan Babu M."/>
            <person name="Madera M."/>
            <person name="Marchionni L."/>
            <person name="Matsuda H."/>
            <person name="Matsuzawa S."/>
            <person name="Miki H."/>
            <person name="Mignone F."/>
            <person name="Miyake S."/>
            <person name="Morris K."/>
            <person name="Mottagui-Tabar S."/>
            <person name="Mulder N."/>
            <person name="Nakano N."/>
            <person name="Nakauchi H."/>
            <person name="Ng P."/>
            <person name="Nilsson R."/>
            <person name="Nishiguchi S."/>
            <person name="Nishikawa S."/>
            <person name="Nori F."/>
            <person name="Ohara O."/>
            <person name="Okazaki Y."/>
            <person name="Orlando V."/>
            <person name="Pang K.C."/>
            <person name="Pavan W.J."/>
            <person name="Pavesi G."/>
            <person name="Pesole G."/>
            <person name="Petrovsky N."/>
            <person name="Piazza S."/>
            <person name="Reed J."/>
            <person name="Reid J.F."/>
            <person name="Ring B.Z."/>
            <person name="Ringwald M."/>
            <person name="Rost B."/>
            <person name="Ruan Y."/>
            <person name="Salzberg S.L."/>
            <person name="Sandelin A."/>
            <person name="Schneider C."/>
            <person name="Schoenbach C."/>
            <person name="Sekiguchi K."/>
            <person name="Semple C.A."/>
            <person name="Seno S."/>
            <person name="Sessa L."/>
            <person name="Sheng Y."/>
            <person name="Shibata Y."/>
            <person name="Shimada H."/>
            <person name="Shimada K."/>
            <person name="Silva D."/>
            <person name="Sinclair B."/>
            <person name="Sperling S."/>
            <person name="Stupka E."/>
            <person name="Sugiura K."/>
            <person name="Sultana R."/>
            <person name="Takenaka Y."/>
            <person name="Taki K."/>
            <person name="Tammoja K."/>
            <person name="Tan S.L."/>
            <person name="Tang S."/>
            <person name="Taylor M.S."/>
            <person name="Tegner J."/>
            <person name="Teichmann S.A."/>
            <person name="Ueda H.R."/>
            <person name="van Nimwegen E."/>
            <person name="Verardo R."/>
            <person name="Wei C.L."/>
            <person name="Yagi K."/>
            <person name="Yamanishi H."/>
            <person name="Zabarovsky E."/>
            <person name="Zhu S."/>
            <person name="Zimmer A."/>
            <person name="Hide W."/>
            <person name="Bult C."/>
            <person name="Grimmond S.M."/>
            <person name="Teasdale R.D."/>
            <person name="Liu E.T."/>
            <person name="Brusic V."/>
            <person name="Quackenbush J."/>
            <person name="Wahlestedt C."/>
            <person name="Mattick J.S."/>
            <person name="Hume D.A."/>
            <person name="Kai C."/>
            <person name="Sasaki D."/>
            <person name="Tomaru Y."/>
            <person name="Fukuda S."/>
            <person name="Kanamori-Katayama M."/>
            <person name="Suzuki M."/>
            <person name="Aoki J."/>
            <person name="Arakawa T."/>
            <person name="Iida J."/>
            <person name="Imamura K."/>
            <person name="Itoh M."/>
            <person name="Kato T."/>
            <person name="Kawaji H."/>
            <person name="Kawagashira N."/>
            <person name="Kawashima T."/>
            <person name="Kojima M."/>
            <person name="Kondo S."/>
            <person name="Konno H."/>
            <person name="Nakano K."/>
            <person name="Ninomiya N."/>
            <person name="Nishio T."/>
            <person name="Okada M."/>
            <person name="Plessy C."/>
            <person name="Shibata K."/>
            <person name="Shiraki T."/>
            <person name="Suzuki S."/>
            <person name="Tagami M."/>
            <person name="Waki K."/>
            <person name="Watahiki A."/>
            <person name="Okamura-Oho Y."/>
            <person name="Suzuki H."/>
            <person name="Kawai J."/>
            <person name="Hayashizaki Y."/>
        </authorList>
    </citation>
    <scope>NUCLEOTIDE SEQUENCE [LARGE SCALE MRNA]</scope>
    <source>
        <strain>C57BL/6J</strain>
        <tissue>Colon</tissue>
        <tissue>Embryonic liver</tissue>
        <tissue>Kidney</tissue>
        <tissue>Pancreas</tissue>
        <tissue>Small intestine</tissue>
    </source>
</reference>
<reference key="3">
    <citation type="journal article" date="2004" name="Genome Res.">
        <title>The status, quality, and expansion of the NIH full-length cDNA project: the Mammalian Gene Collection (MGC).</title>
        <authorList>
            <consortium name="The MGC Project Team"/>
        </authorList>
    </citation>
    <scope>NUCLEOTIDE SEQUENCE [LARGE SCALE MRNA]</scope>
    <source>
        <tissue>Mammary tumor</tissue>
    </source>
</reference>
<reference key="4">
    <citation type="journal article" date="2010" name="Cell">
        <title>A tissue-specific atlas of mouse protein phosphorylation and expression.</title>
        <authorList>
            <person name="Huttlin E.L."/>
            <person name="Jedrychowski M.P."/>
            <person name="Elias J.E."/>
            <person name="Goswami T."/>
            <person name="Rad R."/>
            <person name="Beausoleil S.A."/>
            <person name="Villen J."/>
            <person name="Haas W."/>
            <person name="Sowa M.E."/>
            <person name="Gygi S.P."/>
        </authorList>
    </citation>
    <scope>IDENTIFICATION BY MASS SPECTROMETRY [LARGE SCALE ANALYSIS]</scope>
    <source>
        <tissue>Brain</tissue>
        <tissue>Brown adipose tissue</tissue>
        <tissue>Heart</tissue>
        <tissue>Kidney</tissue>
        <tissue>Liver</tissue>
        <tissue>Lung</tissue>
        <tissue>Pancreas</tissue>
        <tissue>Spleen</tissue>
        <tissue>Testis</tissue>
    </source>
</reference>
<organism>
    <name type="scientific">Mus musculus</name>
    <name type="common">Mouse</name>
    <dbReference type="NCBI Taxonomy" id="10090"/>
    <lineage>
        <taxon>Eukaryota</taxon>
        <taxon>Metazoa</taxon>
        <taxon>Chordata</taxon>
        <taxon>Craniata</taxon>
        <taxon>Vertebrata</taxon>
        <taxon>Euteleostomi</taxon>
        <taxon>Mammalia</taxon>
        <taxon>Eutheria</taxon>
        <taxon>Euarchontoglires</taxon>
        <taxon>Glires</taxon>
        <taxon>Rodentia</taxon>
        <taxon>Myomorpha</taxon>
        <taxon>Muroidea</taxon>
        <taxon>Muridae</taxon>
        <taxon>Murinae</taxon>
        <taxon>Mus</taxon>
        <taxon>Mus</taxon>
    </lineage>
</organism>
<keyword id="KW-0012">Acyltransferase</keyword>
<keyword id="KW-0967">Endosome</keyword>
<keyword id="KW-0333">Golgi apparatus</keyword>
<keyword id="KW-0472">Membrane</keyword>
<keyword id="KW-1185">Reference proteome</keyword>
<keyword id="KW-0808">Transferase</keyword>
<proteinExistence type="evidence at protein level"/>
<accession>Q9JK38</accession>
<protein>
    <recommendedName>
        <fullName>Glucosamine 6-phosphate N-acetyltransferase</fullName>
        <ecNumber evidence="1">2.3.1.4</ecNumber>
    </recommendedName>
    <alternativeName>
        <fullName>Phosphoglucosamine acetylase</fullName>
    </alternativeName>
    <alternativeName>
        <fullName>Phosphoglucosamine transacetylase</fullName>
    </alternativeName>
    <alternativeName>
        <fullName>Protein EMeg32</fullName>
    </alternativeName>
</protein>
<comment type="catalytic activity">
    <reaction evidence="1">
        <text>D-glucosamine 6-phosphate + acetyl-CoA = N-acetyl-D-glucosamine 6-phosphate + CoA + H(+)</text>
        <dbReference type="Rhea" id="RHEA:10292"/>
        <dbReference type="ChEBI" id="CHEBI:15378"/>
        <dbReference type="ChEBI" id="CHEBI:57287"/>
        <dbReference type="ChEBI" id="CHEBI:57288"/>
        <dbReference type="ChEBI" id="CHEBI:57513"/>
        <dbReference type="ChEBI" id="CHEBI:58725"/>
        <dbReference type="EC" id="2.3.1.4"/>
    </reaction>
</comment>
<comment type="pathway">
    <text>Nucleotide-sugar biosynthesis; UDP-N-acetyl-alpha-D-glucosamine biosynthesis; N-acetyl-alpha-D-glucosamine 1-phosphate from alpha-D-glucosamine 6-phosphate (route I): step 1/2.</text>
</comment>
<comment type="subunit">
    <text evidence="1">Homodimer.</text>
</comment>
<comment type="subcellular location">
    <subcellularLocation>
        <location evidence="3">Golgi apparatus membrane</location>
        <topology evidence="3">Peripheral membrane protein</topology>
    </subcellularLocation>
    <subcellularLocation>
        <location evidence="3">Endosome membrane</location>
        <topology evidence="3">Peripheral membrane protein</topology>
    </subcellularLocation>
</comment>
<comment type="tissue specificity">
    <text evidence="3">Ubiquitous. Shows a strong differential expression pattern in adult hematopoietic precursor cells.</text>
</comment>
<comment type="developmental stage">
    <text evidence="3">Widely expressed at early stages of embryonic development but is confined to bones, skin and the hematopoietic system at later developmental stages.</text>
</comment>
<comment type="similarity">
    <text evidence="4">Belongs to the acetyltransferase family. GNA1 subfamily.</text>
</comment>
<dbReference type="EC" id="2.3.1.4" evidence="1"/>
<dbReference type="EMBL" id="AJ001006">
    <property type="protein sequence ID" value="CAA04463.1"/>
    <property type="molecule type" value="mRNA"/>
</dbReference>
<dbReference type="EMBL" id="AK018499">
    <property type="protein sequence ID" value="BAB31241.1"/>
    <property type="molecule type" value="mRNA"/>
</dbReference>
<dbReference type="EMBL" id="AK002466">
    <property type="protein sequence ID" value="BAB22120.1"/>
    <property type="molecule type" value="mRNA"/>
</dbReference>
<dbReference type="EMBL" id="AK007647">
    <property type="protein sequence ID" value="BAB25161.1"/>
    <property type="molecule type" value="mRNA"/>
</dbReference>
<dbReference type="EMBL" id="AK007722">
    <property type="protein sequence ID" value="BAB25212.1"/>
    <property type="molecule type" value="mRNA"/>
</dbReference>
<dbReference type="EMBL" id="AK007764">
    <property type="protein sequence ID" value="BAB25240.1"/>
    <property type="molecule type" value="mRNA"/>
</dbReference>
<dbReference type="EMBL" id="AK008566">
    <property type="protein sequence ID" value="BAB25749.1"/>
    <property type="molecule type" value="mRNA"/>
</dbReference>
<dbReference type="EMBL" id="AK011098">
    <property type="protein sequence ID" value="BAB27395.1"/>
    <property type="molecule type" value="mRNA"/>
</dbReference>
<dbReference type="EMBL" id="BC031116">
    <property type="protein sequence ID" value="AAH31116.1"/>
    <property type="molecule type" value="mRNA"/>
</dbReference>
<dbReference type="CCDS" id="CCDS26976.1"/>
<dbReference type="RefSeq" id="NP_001404471.1">
    <property type="nucleotide sequence ID" value="NM_001417542.1"/>
</dbReference>
<dbReference type="RefSeq" id="NP_001404472.1">
    <property type="nucleotide sequence ID" value="NM_001417543.1"/>
</dbReference>
<dbReference type="RefSeq" id="NP_001404473.1">
    <property type="nucleotide sequence ID" value="NM_001417544.1"/>
</dbReference>
<dbReference type="RefSeq" id="NP_001404474.1">
    <property type="nucleotide sequence ID" value="NM_001417545.1"/>
</dbReference>
<dbReference type="RefSeq" id="NP_001404475.1">
    <property type="nucleotide sequence ID" value="NM_001417546.1"/>
</dbReference>
<dbReference type="RefSeq" id="NP_062298.1">
    <property type="nucleotide sequence ID" value="NM_019425.3"/>
</dbReference>
<dbReference type="RefSeq" id="XP_006519338.1">
    <property type="nucleotide sequence ID" value="XM_006519275.2"/>
</dbReference>
<dbReference type="RefSeq" id="XP_006519339.1">
    <property type="nucleotide sequence ID" value="XM_006519276.3"/>
</dbReference>
<dbReference type="RefSeq" id="XP_036014653.1">
    <property type="nucleotide sequence ID" value="XM_036158760.1"/>
</dbReference>
<dbReference type="SMR" id="Q9JK38"/>
<dbReference type="BioGRID" id="207615">
    <property type="interactions" value="9"/>
</dbReference>
<dbReference type="FunCoup" id="Q9JK38">
    <property type="interactions" value="1955"/>
</dbReference>
<dbReference type="IntAct" id="Q9JK38">
    <property type="interactions" value="10"/>
</dbReference>
<dbReference type="STRING" id="10090.ENSMUSP00000042860"/>
<dbReference type="GlyGen" id="Q9JK38">
    <property type="glycosylation" value="1 site, 1 O-linked glycan (1 site)"/>
</dbReference>
<dbReference type="iPTMnet" id="Q9JK38"/>
<dbReference type="PhosphoSitePlus" id="Q9JK38"/>
<dbReference type="SwissPalm" id="Q9JK38"/>
<dbReference type="jPOST" id="Q9JK38"/>
<dbReference type="PaxDb" id="10090-ENSMUSP00000042860"/>
<dbReference type="PeptideAtlas" id="Q9JK38"/>
<dbReference type="ProteomicsDB" id="271411"/>
<dbReference type="Pumba" id="Q9JK38"/>
<dbReference type="Antibodypedia" id="10869">
    <property type="antibodies" value="110 antibodies from 23 providers"/>
</dbReference>
<dbReference type="DNASU" id="54342"/>
<dbReference type="Ensembl" id="ENSMUST00000046191.9">
    <property type="protein sequence ID" value="ENSMUSP00000042860.8"/>
    <property type="gene ID" value="ENSMUSG00000037722.9"/>
</dbReference>
<dbReference type="Ensembl" id="ENSMUST00000227468.2">
    <property type="protein sequence ID" value="ENSMUSP00000154084.2"/>
    <property type="gene ID" value="ENSMUSG00000037722.9"/>
</dbReference>
<dbReference type="GeneID" id="54342"/>
<dbReference type="KEGG" id="mmu:54342"/>
<dbReference type="UCSC" id="uc007tgp.1">
    <property type="organism name" value="mouse"/>
</dbReference>
<dbReference type="AGR" id="MGI:1858963"/>
<dbReference type="CTD" id="64841"/>
<dbReference type="MGI" id="MGI:1858963">
    <property type="gene designation" value="Gnpnat1"/>
</dbReference>
<dbReference type="VEuPathDB" id="HostDB:ENSMUSG00000037722"/>
<dbReference type="eggNOG" id="KOG3396">
    <property type="taxonomic scope" value="Eukaryota"/>
</dbReference>
<dbReference type="GeneTree" id="ENSGT00390000008666"/>
<dbReference type="HOGENOM" id="CLU_072095_1_0_1"/>
<dbReference type="InParanoid" id="Q9JK38"/>
<dbReference type="OMA" id="LVVEMKF"/>
<dbReference type="PhylomeDB" id="Q9JK38"/>
<dbReference type="TreeFam" id="TF313790"/>
<dbReference type="BioCyc" id="MetaCyc:MONOMER-13176"/>
<dbReference type="BRENDA" id="2.3.1.4">
    <property type="organism ID" value="3474"/>
</dbReference>
<dbReference type="Reactome" id="R-MMU-446210">
    <property type="pathway name" value="Synthesis of UDP-N-acetyl-glucosamine"/>
</dbReference>
<dbReference type="SABIO-RK" id="Q9JK38"/>
<dbReference type="UniPathway" id="UPA00113">
    <property type="reaction ID" value="UER00529"/>
</dbReference>
<dbReference type="BioGRID-ORCS" id="54342">
    <property type="hits" value="14 hits in 83 CRISPR screens"/>
</dbReference>
<dbReference type="ChiTaRS" id="Gnpnat1">
    <property type="organism name" value="mouse"/>
</dbReference>
<dbReference type="PRO" id="PR:Q9JK38"/>
<dbReference type="Proteomes" id="UP000000589">
    <property type="component" value="Chromosome 14"/>
</dbReference>
<dbReference type="RNAct" id="Q9JK38">
    <property type="molecule type" value="protein"/>
</dbReference>
<dbReference type="Bgee" id="ENSMUSG00000037722">
    <property type="expression patterns" value="Expressed in blastoderm cell in morula and 237 other cell types or tissues"/>
</dbReference>
<dbReference type="ExpressionAtlas" id="Q9JK38">
    <property type="expression patterns" value="baseline and differential"/>
</dbReference>
<dbReference type="GO" id="GO:0005793">
    <property type="term" value="C:endoplasmic reticulum-Golgi intermediate compartment"/>
    <property type="evidence" value="ECO:0000314"/>
    <property type="project" value="MGI"/>
</dbReference>
<dbReference type="GO" id="GO:0010008">
    <property type="term" value="C:endosome membrane"/>
    <property type="evidence" value="ECO:0007669"/>
    <property type="project" value="UniProtKB-SubCell"/>
</dbReference>
<dbReference type="GO" id="GO:0005794">
    <property type="term" value="C:Golgi apparatus"/>
    <property type="evidence" value="ECO:0000314"/>
    <property type="project" value="MGI"/>
</dbReference>
<dbReference type="GO" id="GO:0000139">
    <property type="term" value="C:Golgi membrane"/>
    <property type="evidence" value="ECO:0007669"/>
    <property type="project" value="UniProtKB-SubCell"/>
</dbReference>
<dbReference type="GO" id="GO:0005770">
    <property type="term" value="C:late endosome"/>
    <property type="evidence" value="ECO:0000314"/>
    <property type="project" value="MGI"/>
</dbReference>
<dbReference type="GO" id="GO:0004343">
    <property type="term" value="F:glucosamine 6-phosphate N-acetyltransferase activity"/>
    <property type="evidence" value="ECO:0000314"/>
    <property type="project" value="MGI"/>
</dbReference>
<dbReference type="GO" id="GO:0042802">
    <property type="term" value="F:identical protein binding"/>
    <property type="evidence" value="ECO:0007669"/>
    <property type="project" value="Ensembl"/>
</dbReference>
<dbReference type="GO" id="GO:1990830">
    <property type="term" value="P:cellular response to leukemia inhibitory factor"/>
    <property type="evidence" value="ECO:0000270"/>
    <property type="project" value="MGI"/>
</dbReference>
<dbReference type="GO" id="GO:0006048">
    <property type="term" value="P:UDP-N-acetylglucosamine biosynthetic process"/>
    <property type="evidence" value="ECO:0000315"/>
    <property type="project" value="FlyBase"/>
</dbReference>
<dbReference type="FunFam" id="3.40.630.30:FF:000031">
    <property type="entry name" value="Glucosamine 6-phosphate N-acetyltransferase"/>
    <property type="match status" value="1"/>
</dbReference>
<dbReference type="Gene3D" id="3.40.630.30">
    <property type="match status" value="1"/>
</dbReference>
<dbReference type="InterPro" id="IPR016181">
    <property type="entry name" value="Acyl_CoA_acyltransferase"/>
</dbReference>
<dbReference type="InterPro" id="IPR000182">
    <property type="entry name" value="GNAT_dom"/>
</dbReference>
<dbReference type="InterPro" id="IPR039143">
    <property type="entry name" value="GNPNAT1-like"/>
</dbReference>
<dbReference type="PANTHER" id="PTHR13355">
    <property type="entry name" value="GLUCOSAMINE 6-PHOSPHATE N-ACETYLTRANSFERASE"/>
    <property type="match status" value="1"/>
</dbReference>
<dbReference type="PANTHER" id="PTHR13355:SF11">
    <property type="entry name" value="GLUCOSAMINE 6-PHOSPHATE N-ACETYLTRANSFERASE"/>
    <property type="match status" value="1"/>
</dbReference>
<dbReference type="Pfam" id="PF00583">
    <property type="entry name" value="Acetyltransf_1"/>
    <property type="match status" value="1"/>
</dbReference>
<dbReference type="SUPFAM" id="SSF55729">
    <property type="entry name" value="Acyl-CoA N-acyltransferases (Nat)"/>
    <property type="match status" value="1"/>
</dbReference>
<dbReference type="PROSITE" id="PS51186">
    <property type="entry name" value="GNAT"/>
    <property type="match status" value="1"/>
</dbReference>
<evidence type="ECO:0000250" key="1">
    <source>
        <dbReference type="UniProtKB" id="Q96EK6"/>
    </source>
</evidence>
<evidence type="ECO:0000255" key="2">
    <source>
        <dbReference type="PROSITE-ProRule" id="PRU00532"/>
    </source>
</evidence>
<evidence type="ECO:0000269" key="3">
    <source>
    </source>
</evidence>
<evidence type="ECO:0000305" key="4"/>
<name>GNA1_MOUSE</name>
<feature type="chain" id="PRO_0000074554" description="Glucosamine 6-phosphate N-acetyltransferase">
    <location>
        <begin position="1"/>
        <end position="184"/>
    </location>
</feature>
<feature type="domain" description="N-acetyltransferase" evidence="2">
    <location>
        <begin position="39"/>
        <end position="184"/>
    </location>
</feature>
<feature type="binding site" evidence="1">
    <location>
        <position position="61"/>
    </location>
    <ligand>
        <name>substrate</name>
    </ligand>
</feature>
<feature type="binding site" evidence="1">
    <location>
        <begin position="108"/>
        <end position="111"/>
    </location>
    <ligand>
        <name>substrate</name>
    </ligand>
</feature>
<feature type="binding site" evidence="1">
    <location>
        <begin position="120"/>
        <end position="122"/>
    </location>
    <ligand>
        <name>substrate</name>
    </ligand>
</feature>
<feature type="binding site" evidence="1">
    <location>
        <begin position="130"/>
        <end position="135"/>
    </location>
    <ligand>
        <name>acetyl-CoA</name>
        <dbReference type="ChEBI" id="CHEBI:57288"/>
    </ligand>
</feature>
<feature type="binding site" evidence="1">
    <location>
        <begin position="151"/>
        <end position="152"/>
    </location>
    <ligand>
        <name>substrate</name>
    </ligand>
</feature>
<feature type="binding site" evidence="1">
    <location>
        <begin position="165"/>
        <end position="167"/>
    </location>
    <ligand>
        <name>acetyl-CoA</name>
        <dbReference type="ChEBI" id="CHEBI:57288"/>
    </ligand>
</feature>
<feature type="binding site" evidence="1">
    <location>
        <position position="175"/>
    </location>
    <ligand>
        <name>substrate</name>
    </ligand>
</feature>
<feature type="binding site" evidence="1">
    <location>
        <position position="181"/>
    </location>
    <ligand>
        <name>substrate</name>
    </ligand>
</feature>
<gene>
    <name type="primary">Gnpnat1</name>
    <name type="synonym">Gna1</name>
</gene>
<sequence>MKPDETPMFDPSLLKEVDWSQNTAIFSPAISPTHPGEGLVLRPLCTADLNKGFFKVLGQLTETGVVSPEQFMKSFEHMKKSGDYYVTVVEDVTLGQIVATATLIIEHKFIHSCAKRGRVEDVVVSDECRGKQLGKLLLSTLTLLSKKLNCYKITLECLPQNVGFYKKFDYTVSEENYMCRRFLK</sequence>